<sequence>MTRFLLIIILGFLLTACQQVTVDEPEFVPHQLTELRVGTLYGPQIYMTSGQGNSGFDYDMALRFAEYLNVPLKMVPYTNRSELYDALKKNDIDIIAAGMTETPARREQFRLGPPLYRVNQVLVYREGVAAPKDISKLKGRITIIADSAFVETLTQLQKHHPSLVWDQVTDKDSEELLAMIANKEIDYTIADSSSVQINRRYLPDLRSGPVLEEKLDVVWLLPPTHSDALMSQLLAFWHQEKLAGTLDHLNEKYFGHVKRFDYIDTRAFLRAIETVLPRYRQLFETHAGDLDWRKLAATSYQESHWNPHARSPTGVRGMMMLTEPTAKEIGITNRLDAEESIRGGAAYLRDMINRLPESIPESQRMWFALASYNIGYAHVEDARKLAESMELNPNAWRDLKKVLPLLQKRKYYQKTRYGYARGSEAVHYVDSIRRYYDTLVWVDNQSKQPMPEDEQNDLIAEELPSMPAGSLSPDQPK</sequence>
<organism>
    <name type="scientific">Shewanella sp. (strain W3-18-1)</name>
    <dbReference type="NCBI Taxonomy" id="351745"/>
    <lineage>
        <taxon>Bacteria</taxon>
        <taxon>Pseudomonadati</taxon>
        <taxon>Pseudomonadota</taxon>
        <taxon>Gammaproteobacteria</taxon>
        <taxon>Alteromonadales</taxon>
        <taxon>Shewanellaceae</taxon>
        <taxon>Shewanella</taxon>
    </lineage>
</organism>
<feature type="signal peptide" evidence="1">
    <location>
        <begin position="1"/>
        <end position="22"/>
    </location>
</feature>
<feature type="chain" id="PRO_5000203885" description="Membrane-bound lytic murein transglycosylase F">
    <location>
        <begin position="23"/>
        <end position="477"/>
    </location>
</feature>
<feature type="region of interest" description="Non-LT domain" evidence="1">
    <location>
        <begin position="23"/>
        <end position="257"/>
    </location>
</feature>
<feature type="region of interest" description="LT domain" evidence="1">
    <location>
        <begin position="258"/>
        <end position="477"/>
    </location>
</feature>
<feature type="region of interest" description="Disordered" evidence="2">
    <location>
        <begin position="446"/>
        <end position="477"/>
    </location>
</feature>
<feature type="compositionally biased region" description="Acidic residues" evidence="2">
    <location>
        <begin position="451"/>
        <end position="460"/>
    </location>
</feature>
<feature type="active site" evidence="1">
    <location>
        <position position="302"/>
    </location>
</feature>
<proteinExistence type="inferred from homology"/>
<dbReference type="EC" id="4.2.2.n1" evidence="1"/>
<dbReference type="EMBL" id="CP000503">
    <property type="protein sequence ID" value="ABM24207.1"/>
    <property type="molecule type" value="Genomic_DNA"/>
</dbReference>
<dbReference type="RefSeq" id="WP_011788713.1">
    <property type="nucleotide sequence ID" value="NC_008750.1"/>
</dbReference>
<dbReference type="SMR" id="A1RHR2"/>
<dbReference type="CAZy" id="GH23">
    <property type="family name" value="Glycoside Hydrolase Family 23"/>
</dbReference>
<dbReference type="DNASU" id="4657750"/>
<dbReference type="GeneID" id="67444243"/>
<dbReference type="KEGG" id="shw:Sputw3181_1364"/>
<dbReference type="HOGENOM" id="CLU_027494_0_1_6"/>
<dbReference type="Proteomes" id="UP000002597">
    <property type="component" value="Chromosome"/>
</dbReference>
<dbReference type="GO" id="GO:0009279">
    <property type="term" value="C:cell outer membrane"/>
    <property type="evidence" value="ECO:0007669"/>
    <property type="project" value="UniProtKB-SubCell"/>
</dbReference>
<dbReference type="GO" id="GO:0008933">
    <property type="term" value="F:peptidoglycan lytic transglycosylase activity"/>
    <property type="evidence" value="ECO:0007669"/>
    <property type="project" value="UniProtKB-UniRule"/>
</dbReference>
<dbReference type="GO" id="GO:0016998">
    <property type="term" value="P:cell wall macromolecule catabolic process"/>
    <property type="evidence" value="ECO:0007669"/>
    <property type="project" value="UniProtKB-UniRule"/>
</dbReference>
<dbReference type="GO" id="GO:0071555">
    <property type="term" value="P:cell wall organization"/>
    <property type="evidence" value="ECO:0007669"/>
    <property type="project" value="UniProtKB-KW"/>
</dbReference>
<dbReference type="GO" id="GO:0009253">
    <property type="term" value="P:peptidoglycan catabolic process"/>
    <property type="evidence" value="ECO:0007669"/>
    <property type="project" value="TreeGrafter"/>
</dbReference>
<dbReference type="CDD" id="cd13403">
    <property type="entry name" value="MLTF-like"/>
    <property type="match status" value="1"/>
</dbReference>
<dbReference type="CDD" id="cd01009">
    <property type="entry name" value="PBP2_YfhD_N"/>
    <property type="match status" value="1"/>
</dbReference>
<dbReference type="FunFam" id="1.10.530.10:FF:000003">
    <property type="entry name" value="Membrane-bound lytic murein transglycosylase F"/>
    <property type="match status" value="1"/>
</dbReference>
<dbReference type="Gene3D" id="1.10.530.10">
    <property type="match status" value="1"/>
</dbReference>
<dbReference type="Gene3D" id="3.40.190.10">
    <property type="entry name" value="Periplasmic binding protein-like II"/>
    <property type="match status" value="2"/>
</dbReference>
<dbReference type="HAMAP" id="MF_02016">
    <property type="entry name" value="MltF"/>
    <property type="match status" value="1"/>
</dbReference>
<dbReference type="InterPro" id="IPR023346">
    <property type="entry name" value="Lysozyme-like_dom_sf"/>
</dbReference>
<dbReference type="InterPro" id="IPR023703">
    <property type="entry name" value="MltF"/>
</dbReference>
<dbReference type="InterPro" id="IPR001638">
    <property type="entry name" value="Solute-binding_3/MltF_N"/>
</dbReference>
<dbReference type="InterPro" id="IPR008258">
    <property type="entry name" value="Transglycosylase_SLT_dom_1"/>
</dbReference>
<dbReference type="NCBIfam" id="NF008112">
    <property type="entry name" value="PRK10859.1"/>
    <property type="match status" value="1"/>
</dbReference>
<dbReference type="PANTHER" id="PTHR35936">
    <property type="entry name" value="MEMBRANE-BOUND LYTIC MUREIN TRANSGLYCOSYLASE F"/>
    <property type="match status" value="1"/>
</dbReference>
<dbReference type="PANTHER" id="PTHR35936:SF32">
    <property type="entry name" value="MEMBRANE-BOUND LYTIC MUREIN TRANSGLYCOSYLASE F"/>
    <property type="match status" value="1"/>
</dbReference>
<dbReference type="Pfam" id="PF00497">
    <property type="entry name" value="SBP_bac_3"/>
    <property type="match status" value="1"/>
</dbReference>
<dbReference type="Pfam" id="PF01464">
    <property type="entry name" value="SLT"/>
    <property type="match status" value="1"/>
</dbReference>
<dbReference type="SMART" id="SM00062">
    <property type="entry name" value="PBPb"/>
    <property type="match status" value="1"/>
</dbReference>
<dbReference type="SUPFAM" id="SSF53955">
    <property type="entry name" value="Lysozyme-like"/>
    <property type="match status" value="1"/>
</dbReference>
<dbReference type="SUPFAM" id="SSF53850">
    <property type="entry name" value="Periplasmic binding protein-like II"/>
    <property type="match status" value="1"/>
</dbReference>
<dbReference type="PROSITE" id="PS51257">
    <property type="entry name" value="PROKAR_LIPOPROTEIN"/>
    <property type="match status" value="1"/>
</dbReference>
<evidence type="ECO:0000255" key="1">
    <source>
        <dbReference type="HAMAP-Rule" id="MF_02016"/>
    </source>
</evidence>
<evidence type="ECO:0000256" key="2">
    <source>
        <dbReference type="SAM" id="MobiDB-lite"/>
    </source>
</evidence>
<protein>
    <recommendedName>
        <fullName evidence="1">Membrane-bound lytic murein transglycosylase F</fullName>
        <ecNumber evidence="1">4.2.2.n1</ecNumber>
    </recommendedName>
    <alternativeName>
        <fullName evidence="1">Murein lyase F</fullName>
    </alternativeName>
</protein>
<comment type="function">
    <text evidence="1">Murein-degrading enzyme that degrades murein glycan strands and insoluble, high-molecular weight murein sacculi, with the concomitant formation of a 1,6-anhydromuramoyl product. Lytic transglycosylases (LTs) play an integral role in the metabolism of the peptidoglycan (PG) sacculus. Their lytic action creates space within the PG sacculus to allow for its expansion as well as for the insertion of various structures such as secretion systems and flagella.</text>
</comment>
<comment type="catalytic activity">
    <reaction evidence="1">
        <text>Exolytic cleavage of the (1-&gt;4)-beta-glycosidic linkage between N-acetylmuramic acid (MurNAc) and N-acetylglucosamine (GlcNAc) residues in peptidoglycan, from either the reducing or the non-reducing ends of the peptidoglycan chains, with concomitant formation of a 1,6-anhydrobond in the MurNAc residue.</text>
        <dbReference type="EC" id="4.2.2.n1"/>
    </reaction>
</comment>
<comment type="subcellular location">
    <subcellularLocation>
        <location>Cell outer membrane</location>
        <topology>Peripheral membrane protein</topology>
    </subcellularLocation>
    <text evidence="1">Attached to the inner leaflet of the outer membrane.</text>
</comment>
<comment type="domain">
    <text evidence="1">The N-terminal domain does not have lytic activity and probably modulates enzymatic activity. The C-terminal domain is the catalytic active domain.</text>
</comment>
<comment type="similarity">
    <text evidence="1">In the N-terminal section; belongs to the bacterial solute-binding protein 3 family.</text>
</comment>
<comment type="similarity">
    <text evidence="1">In the C-terminal section; belongs to the transglycosylase Slt family.</text>
</comment>
<name>MLTF_SHESW</name>
<reference key="1">
    <citation type="submission" date="2006-12" db="EMBL/GenBank/DDBJ databases">
        <title>Complete sequence of Shewanella sp. W3-18-1.</title>
        <authorList>
            <consortium name="US DOE Joint Genome Institute"/>
            <person name="Copeland A."/>
            <person name="Lucas S."/>
            <person name="Lapidus A."/>
            <person name="Barry K."/>
            <person name="Detter J.C."/>
            <person name="Glavina del Rio T."/>
            <person name="Hammon N."/>
            <person name="Israni S."/>
            <person name="Dalin E."/>
            <person name="Tice H."/>
            <person name="Pitluck S."/>
            <person name="Chain P."/>
            <person name="Malfatti S."/>
            <person name="Shin M."/>
            <person name="Vergez L."/>
            <person name="Schmutz J."/>
            <person name="Larimer F."/>
            <person name="Land M."/>
            <person name="Hauser L."/>
            <person name="Kyrpides N."/>
            <person name="Lykidis A."/>
            <person name="Tiedje J."/>
            <person name="Richardson P."/>
        </authorList>
    </citation>
    <scope>NUCLEOTIDE SEQUENCE [LARGE SCALE GENOMIC DNA]</scope>
    <source>
        <strain>W3-18-1</strain>
    </source>
</reference>
<gene>
    <name evidence="1" type="primary">mltF</name>
    <name type="ordered locus">Sputw3181_1364</name>
</gene>
<keyword id="KW-0998">Cell outer membrane</keyword>
<keyword id="KW-0961">Cell wall biogenesis/degradation</keyword>
<keyword id="KW-0456">Lyase</keyword>
<keyword id="KW-0472">Membrane</keyword>
<keyword id="KW-0732">Signal</keyword>
<accession>A1RHR2</accession>